<comment type="function">
    <text evidence="1">Enables the recognition and targeting of unfolded and aggregated proteins to the ClpC protease or to other proteins involved in proteolysis.</text>
</comment>
<comment type="subunit">
    <text evidence="1">Homodimer.</text>
</comment>
<comment type="domain">
    <text>The N-terminal domain probably binds unfolded/aggregated proteins; the C-terminal domain interacts with ClpC.</text>
</comment>
<comment type="similarity">
    <text evidence="1">Belongs to the MecA family.</text>
</comment>
<evidence type="ECO:0000255" key="1">
    <source>
        <dbReference type="HAMAP-Rule" id="MF_01124"/>
    </source>
</evidence>
<evidence type="ECO:0000256" key="2">
    <source>
        <dbReference type="SAM" id="MobiDB-lite"/>
    </source>
</evidence>
<proteinExistence type="inferred from homology"/>
<gene>
    <name evidence="1" type="primary">mecA</name>
    <name type="ordered locus">SH1960</name>
</gene>
<protein>
    <recommendedName>
        <fullName evidence="1">Adapter protein MecA</fullName>
    </recommendedName>
</protein>
<accession>Q4L506</accession>
<sequence>MRIERVDDTTVKLFITYSDIEARGFSREDLWTNRKRGEEFFWSMMDEINEEEDFVVEGPLWIQVHAFEKGVEVTISKSKNEEAMNMSDEDANEQFEEQVNELLANTLENEESIEDLFEQRAQQQKHSHKSEQKQTKQRPNIRTVIVKFDDLEQVISYAYHHNLSTDEFEDLLYMNDNKYYYAIHFDESVSQEMINDSYSQMLEFAYPTDKTEVYLNDYAKIIMSHNVTAQVRRYFPDTVE</sequence>
<organism>
    <name type="scientific">Staphylococcus haemolyticus (strain JCSC1435)</name>
    <dbReference type="NCBI Taxonomy" id="279808"/>
    <lineage>
        <taxon>Bacteria</taxon>
        <taxon>Bacillati</taxon>
        <taxon>Bacillota</taxon>
        <taxon>Bacilli</taxon>
        <taxon>Bacillales</taxon>
        <taxon>Staphylococcaceae</taxon>
        <taxon>Staphylococcus</taxon>
    </lineage>
</organism>
<feature type="chain" id="PRO_0000212284" description="Adapter protein MecA">
    <location>
        <begin position="1"/>
        <end position="240"/>
    </location>
</feature>
<feature type="region of interest" description="Disordered" evidence="2">
    <location>
        <begin position="118"/>
        <end position="138"/>
    </location>
</feature>
<reference key="1">
    <citation type="journal article" date="2005" name="J. Bacteriol.">
        <title>Whole-genome sequencing of Staphylococcus haemolyticus uncovers the extreme plasticity of its genome and the evolution of human-colonizing staphylococcal species.</title>
        <authorList>
            <person name="Takeuchi F."/>
            <person name="Watanabe S."/>
            <person name="Baba T."/>
            <person name="Yuzawa H."/>
            <person name="Ito T."/>
            <person name="Morimoto Y."/>
            <person name="Kuroda M."/>
            <person name="Cui L."/>
            <person name="Takahashi M."/>
            <person name="Ankai A."/>
            <person name="Baba S."/>
            <person name="Fukui S."/>
            <person name="Lee J.C."/>
            <person name="Hiramatsu K."/>
        </authorList>
    </citation>
    <scope>NUCLEOTIDE SEQUENCE [LARGE SCALE GENOMIC DNA]</scope>
    <source>
        <strain>JCSC1435</strain>
    </source>
</reference>
<name>MECA_STAHJ</name>
<dbReference type="EMBL" id="AP006716">
    <property type="protein sequence ID" value="BAE05269.1"/>
    <property type="molecule type" value="Genomic_DNA"/>
</dbReference>
<dbReference type="RefSeq" id="WP_011276229.1">
    <property type="nucleotide sequence ID" value="NC_007168.1"/>
</dbReference>
<dbReference type="SMR" id="Q4L506"/>
<dbReference type="KEGG" id="sha:SH1960"/>
<dbReference type="eggNOG" id="COG4862">
    <property type="taxonomic scope" value="Bacteria"/>
</dbReference>
<dbReference type="HOGENOM" id="CLU_071496_2_1_9"/>
<dbReference type="OrthoDB" id="2360201at2"/>
<dbReference type="Proteomes" id="UP000000543">
    <property type="component" value="Chromosome"/>
</dbReference>
<dbReference type="GO" id="GO:0030674">
    <property type="term" value="F:protein-macromolecule adaptor activity"/>
    <property type="evidence" value="ECO:0007669"/>
    <property type="project" value="UniProtKB-UniRule"/>
</dbReference>
<dbReference type="Gene3D" id="3.30.70.1950">
    <property type="match status" value="1"/>
</dbReference>
<dbReference type="HAMAP" id="MF_01124">
    <property type="entry name" value="MecA"/>
    <property type="match status" value="1"/>
</dbReference>
<dbReference type="InterPro" id="IPR038471">
    <property type="entry name" value="MecA_C_sf"/>
</dbReference>
<dbReference type="InterPro" id="IPR008681">
    <property type="entry name" value="Neg-reg_MecA"/>
</dbReference>
<dbReference type="NCBIfam" id="NF002642">
    <property type="entry name" value="PRK02315.1-3"/>
    <property type="match status" value="1"/>
</dbReference>
<dbReference type="NCBIfam" id="NF002644">
    <property type="entry name" value="PRK02315.1-5"/>
    <property type="match status" value="1"/>
</dbReference>
<dbReference type="PANTHER" id="PTHR39161">
    <property type="entry name" value="ADAPTER PROTEIN MECA"/>
    <property type="match status" value="1"/>
</dbReference>
<dbReference type="PANTHER" id="PTHR39161:SF1">
    <property type="entry name" value="ADAPTER PROTEIN MECA 1"/>
    <property type="match status" value="1"/>
</dbReference>
<dbReference type="Pfam" id="PF05389">
    <property type="entry name" value="MecA"/>
    <property type="match status" value="1"/>
</dbReference>
<dbReference type="PIRSF" id="PIRSF029008">
    <property type="entry name" value="MecA"/>
    <property type="match status" value="1"/>
</dbReference>